<evidence type="ECO:0000255" key="1">
    <source>
        <dbReference type="HAMAP-Rule" id="MF_01008"/>
    </source>
</evidence>
<evidence type="ECO:0000255" key="2">
    <source>
        <dbReference type="PROSITE-ProRule" id="PRU01076"/>
    </source>
</evidence>
<feature type="chain" id="PRO_1000062916" description="Transcriptional regulator MraZ">
    <location>
        <begin position="1"/>
        <end position="152"/>
    </location>
</feature>
<feature type="domain" description="SpoVT-AbrB 1" evidence="2">
    <location>
        <begin position="5"/>
        <end position="52"/>
    </location>
</feature>
<feature type="domain" description="SpoVT-AbrB 2" evidence="2">
    <location>
        <begin position="81"/>
        <end position="124"/>
    </location>
</feature>
<sequence>MLRGANAINLDTKGRIAIPTRYRDWLGDTCQGQFVCTIDIQSPCLLIYPLNEWLLIETKLRALSSTNPQERRLQRLILGYATESELDKSGRALIAPTLRQHAKLQKKVMLVGQLNKFELWDEDMWNQQIKNDLEDGLPTGIELSSGLREFSL</sequence>
<keyword id="KW-0963">Cytoplasm</keyword>
<keyword id="KW-0238">DNA-binding</keyword>
<keyword id="KW-1185">Reference proteome</keyword>
<keyword id="KW-0677">Repeat</keyword>
<keyword id="KW-0804">Transcription</keyword>
<keyword id="KW-0805">Transcription regulation</keyword>
<comment type="subunit">
    <text evidence="1">Forms oligomers.</text>
</comment>
<comment type="subcellular location">
    <subcellularLocation>
        <location evidence="1">Cytoplasm</location>
        <location evidence="1">Nucleoid</location>
    </subcellularLocation>
</comment>
<comment type="similarity">
    <text evidence="1">Belongs to the MraZ family.</text>
</comment>
<name>MRAZ_PSYIN</name>
<proteinExistence type="inferred from homology"/>
<dbReference type="EMBL" id="CP000510">
    <property type="protein sequence ID" value="ABM02975.1"/>
    <property type="molecule type" value="Genomic_DNA"/>
</dbReference>
<dbReference type="RefSeq" id="WP_011769538.1">
    <property type="nucleotide sequence ID" value="NC_008709.1"/>
</dbReference>
<dbReference type="SMR" id="A1SU10"/>
<dbReference type="STRING" id="357804.Ping_1138"/>
<dbReference type="KEGG" id="pin:Ping_1138"/>
<dbReference type="eggNOG" id="COG2001">
    <property type="taxonomic scope" value="Bacteria"/>
</dbReference>
<dbReference type="HOGENOM" id="CLU_107907_2_0_6"/>
<dbReference type="OrthoDB" id="9807753at2"/>
<dbReference type="Proteomes" id="UP000000639">
    <property type="component" value="Chromosome"/>
</dbReference>
<dbReference type="GO" id="GO:0005737">
    <property type="term" value="C:cytoplasm"/>
    <property type="evidence" value="ECO:0007669"/>
    <property type="project" value="UniProtKB-UniRule"/>
</dbReference>
<dbReference type="GO" id="GO:0009295">
    <property type="term" value="C:nucleoid"/>
    <property type="evidence" value="ECO:0007669"/>
    <property type="project" value="UniProtKB-SubCell"/>
</dbReference>
<dbReference type="GO" id="GO:0003700">
    <property type="term" value="F:DNA-binding transcription factor activity"/>
    <property type="evidence" value="ECO:0007669"/>
    <property type="project" value="UniProtKB-UniRule"/>
</dbReference>
<dbReference type="GO" id="GO:0000976">
    <property type="term" value="F:transcription cis-regulatory region binding"/>
    <property type="evidence" value="ECO:0007669"/>
    <property type="project" value="TreeGrafter"/>
</dbReference>
<dbReference type="GO" id="GO:2000143">
    <property type="term" value="P:negative regulation of DNA-templated transcription initiation"/>
    <property type="evidence" value="ECO:0007669"/>
    <property type="project" value="TreeGrafter"/>
</dbReference>
<dbReference type="CDD" id="cd16321">
    <property type="entry name" value="MraZ_C"/>
    <property type="match status" value="1"/>
</dbReference>
<dbReference type="CDD" id="cd16320">
    <property type="entry name" value="MraZ_N"/>
    <property type="match status" value="1"/>
</dbReference>
<dbReference type="FunFam" id="3.40.1550.20:FF:000001">
    <property type="entry name" value="Transcriptional regulator MraZ"/>
    <property type="match status" value="1"/>
</dbReference>
<dbReference type="Gene3D" id="3.40.1550.20">
    <property type="entry name" value="Transcriptional regulator MraZ domain"/>
    <property type="match status" value="1"/>
</dbReference>
<dbReference type="HAMAP" id="MF_01008">
    <property type="entry name" value="MraZ"/>
    <property type="match status" value="1"/>
</dbReference>
<dbReference type="InterPro" id="IPR003444">
    <property type="entry name" value="MraZ"/>
</dbReference>
<dbReference type="InterPro" id="IPR035644">
    <property type="entry name" value="MraZ_C"/>
</dbReference>
<dbReference type="InterPro" id="IPR020603">
    <property type="entry name" value="MraZ_dom"/>
</dbReference>
<dbReference type="InterPro" id="IPR035642">
    <property type="entry name" value="MraZ_N"/>
</dbReference>
<dbReference type="InterPro" id="IPR038619">
    <property type="entry name" value="MraZ_sf"/>
</dbReference>
<dbReference type="InterPro" id="IPR007159">
    <property type="entry name" value="SpoVT-AbrB_dom"/>
</dbReference>
<dbReference type="InterPro" id="IPR037914">
    <property type="entry name" value="SpoVT-AbrB_sf"/>
</dbReference>
<dbReference type="NCBIfam" id="TIGR00242">
    <property type="entry name" value="division/cell wall cluster transcriptional repressor MraZ"/>
    <property type="match status" value="1"/>
</dbReference>
<dbReference type="PANTHER" id="PTHR34701">
    <property type="entry name" value="TRANSCRIPTIONAL REGULATOR MRAZ"/>
    <property type="match status" value="1"/>
</dbReference>
<dbReference type="PANTHER" id="PTHR34701:SF1">
    <property type="entry name" value="TRANSCRIPTIONAL REGULATOR MRAZ"/>
    <property type="match status" value="1"/>
</dbReference>
<dbReference type="Pfam" id="PF02381">
    <property type="entry name" value="MraZ"/>
    <property type="match status" value="2"/>
</dbReference>
<dbReference type="SUPFAM" id="SSF89447">
    <property type="entry name" value="AbrB/MazE/MraZ-like"/>
    <property type="match status" value="1"/>
</dbReference>
<dbReference type="PROSITE" id="PS51740">
    <property type="entry name" value="SPOVT_ABRB"/>
    <property type="match status" value="2"/>
</dbReference>
<reference key="1">
    <citation type="journal article" date="2008" name="BMC Genomics">
        <title>Genomics of an extreme psychrophile, Psychromonas ingrahamii.</title>
        <authorList>
            <person name="Riley M."/>
            <person name="Staley J.T."/>
            <person name="Danchin A."/>
            <person name="Wang T.Z."/>
            <person name="Brettin T.S."/>
            <person name="Hauser L.J."/>
            <person name="Land M.L."/>
            <person name="Thompson L.S."/>
        </authorList>
    </citation>
    <scope>NUCLEOTIDE SEQUENCE [LARGE SCALE GENOMIC DNA]</scope>
    <source>
        <strain>DSM 17664 / CCUG 51855 / 37</strain>
    </source>
</reference>
<organism>
    <name type="scientific">Psychromonas ingrahamii (strain DSM 17664 / CCUG 51855 / 37)</name>
    <dbReference type="NCBI Taxonomy" id="357804"/>
    <lineage>
        <taxon>Bacteria</taxon>
        <taxon>Pseudomonadati</taxon>
        <taxon>Pseudomonadota</taxon>
        <taxon>Gammaproteobacteria</taxon>
        <taxon>Alteromonadales</taxon>
        <taxon>Psychromonadaceae</taxon>
        <taxon>Psychromonas</taxon>
    </lineage>
</organism>
<protein>
    <recommendedName>
        <fullName>Transcriptional regulator MraZ</fullName>
    </recommendedName>
</protein>
<accession>A1SU10</accession>
<gene>
    <name evidence="1" type="primary">mraZ</name>
    <name type="ordered locus">Ping_1138</name>
</gene>